<organism>
    <name type="scientific">Rattus norvegicus</name>
    <name type="common">Rat</name>
    <dbReference type="NCBI Taxonomy" id="10116"/>
    <lineage>
        <taxon>Eukaryota</taxon>
        <taxon>Metazoa</taxon>
        <taxon>Chordata</taxon>
        <taxon>Craniata</taxon>
        <taxon>Vertebrata</taxon>
        <taxon>Euteleostomi</taxon>
        <taxon>Mammalia</taxon>
        <taxon>Eutheria</taxon>
        <taxon>Euarchontoglires</taxon>
        <taxon>Glires</taxon>
        <taxon>Rodentia</taxon>
        <taxon>Myomorpha</taxon>
        <taxon>Muroidea</taxon>
        <taxon>Muridae</taxon>
        <taxon>Murinae</taxon>
        <taxon>Rattus</taxon>
    </lineage>
</organism>
<sequence length="801" mass="90170">MAEAHQASSLLSSLSSDGAEVELSSSVWQEIYLSALRSWKRNLWRVWNDFLAGVVPATPLSWLFLFSTIQLACLLQLDPSLGLMEKIKELLPDWGGQHHQLQGLLAAAVFASCLWGTLIFTLHVALRLLLSHHGWLLEPHGTMSSPTKTWLALVRIFSGRHPRLFSFQRALPRQPVPGAQETVRKYLESMRPVLRDDAFDSVVALANDFLRLQAPRLQLYLQLKSWCASNYVSDWWEEFVYLRSRGSLVNSTYYMMDFLYVTPTPLQAARAGNAVHTLLLYRHLLNRQEIPPTLLMGMRPLCSAQYERMFNTTRIPGVEKDYLCHLQDSQHVAVFHQGRFFRVGTHSSNGLLSPRALEQQFQYILDDPSPACPLEEHLAALTAAPRSMWAQVRESVKTHAATALETVEGAAFFVSLDSEPAGLTRENPAASLDTYAHTLLTGQGHDRWFDKSFTLIVFSNGKLGLSVEHSWADCPVAGHLWEFTLATECFQLGYATDGHCKGHPDPALPKPQRLQWDLPKQIQPSISLALRGAKTLSGNIDCHVFPFFHFGKSFIKGCHVSSDSFIQLVLQLAHFRDRGQFCLTYESAMTRLFLEGRTETVRSCTREACQFVRAMENKERTDQQCLALFREAVDKHQALLKAAMSGQGIDRHLFALYIMSRLLHMQSPFLTQVQSQQWLLSTSQIPVQQTHLFDVHNYPDYVSSGGGFGPAHDHGYGVSYIFMGENAISFHISSKQSSTETDSHRLGQHIEDALLDVASLFQAGQQFKRQFTGLGESSGWKYSNLSCKTVDPNIPKSSTNL</sequence>
<gene>
    <name type="primary">Cpt1c</name>
</gene>
<evidence type="ECO:0000250" key="1">
    <source>
        <dbReference type="UniProtKB" id="P18886"/>
    </source>
</evidence>
<evidence type="ECO:0000250" key="2">
    <source>
        <dbReference type="UniProtKB" id="Q8BGD5"/>
    </source>
</evidence>
<evidence type="ECO:0000250" key="3">
    <source>
        <dbReference type="UniProtKB" id="Q8TCG5"/>
    </source>
</evidence>
<evidence type="ECO:0000255" key="4"/>
<evidence type="ECO:0000269" key="5">
    <source>
    </source>
</evidence>
<evidence type="ECO:0000269" key="6">
    <source>
    </source>
</evidence>
<evidence type="ECO:0000305" key="7"/>
<reference key="1">
    <citation type="journal article" date="2004" name="Nature">
        <title>Genome sequence of the Brown Norway rat yields insights into mammalian evolution.</title>
        <authorList>
            <person name="Gibbs R.A."/>
            <person name="Weinstock G.M."/>
            <person name="Metzker M.L."/>
            <person name="Muzny D.M."/>
            <person name="Sodergren E.J."/>
            <person name="Scherer S."/>
            <person name="Scott G."/>
            <person name="Steffen D."/>
            <person name="Worley K.C."/>
            <person name="Burch P.E."/>
            <person name="Okwuonu G."/>
            <person name="Hines S."/>
            <person name="Lewis L."/>
            <person name="Deramo C."/>
            <person name="Delgado O."/>
            <person name="Dugan-Rocha S."/>
            <person name="Miner G."/>
            <person name="Morgan M."/>
            <person name="Hawes A."/>
            <person name="Gill R."/>
            <person name="Holt R.A."/>
            <person name="Adams M.D."/>
            <person name="Amanatides P.G."/>
            <person name="Baden-Tillson H."/>
            <person name="Barnstead M."/>
            <person name="Chin S."/>
            <person name="Evans C.A."/>
            <person name="Ferriera S."/>
            <person name="Fosler C."/>
            <person name="Glodek A."/>
            <person name="Gu Z."/>
            <person name="Jennings D."/>
            <person name="Kraft C.L."/>
            <person name="Nguyen T."/>
            <person name="Pfannkoch C.M."/>
            <person name="Sitter C."/>
            <person name="Sutton G.G."/>
            <person name="Venter J.C."/>
            <person name="Woodage T."/>
            <person name="Smith D."/>
            <person name="Lee H.-M."/>
            <person name="Gustafson E."/>
            <person name="Cahill P."/>
            <person name="Kana A."/>
            <person name="Doucette-Stamm L."/>
            <person name="Weinstock K."/>
            <person name="Fechtel K."/>
            <person name="Weiss R.B."/>
            <person name="Dunn D.M."/>
            <person name="Green E.D."/>
            <person name="Blakesley R.W."/>
            <person name="Bouffard G.G."/>
            <person name="De Jong P.J."/>
            <person name="Osoegawa K."/>
            <person name="Zhu B."/>
            <person name="Marra M."/>
            <person name="Schein J."/>
            <person name="Bosdet I."/>
            <person name="Fjell C."/>
            <person name="Jones S."/>
            <person name="Krzywinski M."/>
            <person name="Mathewson C."/>
            <person name="Siddiqui A."/>
            <person name="Wye N."/>
            <person name="McPherson J."/>
            <person name="Zhao S."/>
            <person name="Fraser C.M."/>
            <person name="Shetty J."/>
            <person name="Shatsman S."/>
            <person name="Geer K."/>
            <person name="Chen Y."/>
            <person name="Abramzon S."/>
            <person name="Nierman W.C."/>
            <person name="Havlak P.H."/>
            <person name="Chen R."/>
            <person name="Durbin K.J."/>
            <person name="Egan A."/>
            <person name="Ren Y."/>
            <person name="Song X.-Z."/>
            <person name="Li B."/>
            <person name="Liu Y."/>
            <person name="Qin X."/>
            <person name="Cawley S."/>
            <person name="Cooney A.J."/>
            <person name="D'Souza L.M."/>
            <person name="Martin K."/>
            <person name="Wu J.Q."/>
            <person name="Gonzalez-Garay M.L."/>
            <person name="Jackson A.R."/>
            <person name="Kalafus K.J."/>
            <person name="McLeod M.P."/>
            <person name="Milosavljevic A."/>
            <person name="Virk D."/>
            <person name="Volkov A."/>
            <person name="Wheeler D.A."/>
            <person name="Zhang Z."/>
            <person name="Bailey J.A."/>
            <person name="Eichler E.E."/>
            <person name="Tuzun E."/>
            <person name="Birney E."/>
            <person name="Mongin E."/>
            <person name="Ureta-Vidal A."/>
            <person name="Woodwark C."/>
            <person name="Zdobnov E."/>
            <person name="Bork P."/>
            <person name="Suyama M."/>
            <person name="Torrents D."/>
            <person name="Alexandersson M."/>
            <person name="Trask B.J."/>
            <person name="Young J.M."/>
            <person name="Huang H."/>
            <person name="Wang H."/>
            <person name="Xing H."/>
            <person name="Daniels S."/>
            <person name="Gietzen D."/>
            <person name="Schmidt J."/>
            <person name="Stevens K."/>
            <person name="Vitt U."/>
            <person name="Wingrove J."/>
            <person name="Camara F."/>
            <person name="Mar Alba M."/>
            <person name="Abril J.F."/>
            <person name="Guigo R."/>
            <person name="Smit A."/>
            <person name="Dubchak I."/>
            <person name="Rubin E.M."/>
            <person name="Couronne O."/>
            <person name="Poliakov A."/>
            <person name="Huebner N."/>
            <person name="Ganten D."/>
            <person name="Goesele C."/>
            <person name="Hummel O."/>
            <person name="Kreitler T."/>
            <person name="Lee Y.-A."/>
            <person name="Monti J."/>
            <person name="Schulz H."/>
            <person name="Zimdahl H."/>
            <person name="Himmelbauer H."/>
            <person name="Lehrach H."/>
            <person name="Jacob H.J."/>
            <person name="Bromberg S."/>
            <person name="Gullings-Handley J."/>
            <person name="Jensen-Seaman M.I."/>
            <person name="Kwitek A.E."/>
            <person name="Lazar J."/>
            <person name="Pasko D."/>
            <person name="Tonellato P.J."/>
            <person name="Twigger S."/>
            <person name="Ponting C.P."/>
            <person name="Duarte J.M."/>
            <person name="Rice S."/>
            <person name="Goodstadt L."/>
            <person name="Beatson S.A."/>
            <person name="Emes R.D."/>
            <person name="Winter E.E."/>
            <person name="Webber C."/>
            <person name="Brandt P."/>
            <person name="Nyakatura G."/>
            <person name="Adetobi M."/>
            <person name="Chiaromonte F."/>
            <person name="Elnitski L."/>
            <person name="Eswara P."/>
            <person name="Hardison R.C."/>
            <person name="Hou M."/>
            <person name="Kolbe D."/>
            <person name="Makova K."/>
            <person name="Miller W."/>
            <person name="Nekrutenko A."/>
            <person name="Riemer C."/>
            <person name="Schwartz S."/>
            <person name="Taylor J."/>
            <person name="Yang S."/>
            <person name="Zhang Y."/>
            <person name="Lindpaintner K."/>
            <person name="Andrews T.D."/>
            <person name="Caccamo M."/>
            <person name="Clamp M."/>
            <person name="Clarke L."/>
            <person name="Curwen V."/>
            <person name="Durbin R.M."/>
            <person name="Eyras E."/>
            <person name="Searle S.M."/>
            <person name="Cooper G.M."/>
            <person name="Batzoglou S."/>
            <person name="Brudno M."/>
            <person name="Sidow A."/>
            <person name="Stone E.A."/>
            <person name="Payseur B.A."/>
            <person name="Bourque G."/>
            <person name="Lopez-Otin C."/>
            <person name="Puente X.S."/>
            <person name="Chakrabarti K."/>
            <person name="Chatterji S."/>
            <person name="Dewey C."/>
            <person name="Pachter L."/>
            <person name="Bray N."/>
            <person name="Yap V.B."/>
            <person name="Caspi A."/>
            <person name="Tesler G."/>
            <person name="Pevzner P.A."/>
            <person name="Haussler D."/>
            <person name="Roskin K.M."/>
            <person name="Baertsch R."/>
            <person name="Clawson H."/>
            <person name="Furey T.S."/>
            <person name="Hinrichs A.S."/>
            <person name="Karolchik D."/>
            <person name="Kent W.J."/>
            <person name="Rosenbloom K.R."/>
            <person name="Trumbower H."/>
            <person name="Weirauch M."/>
            <person name="Cooper D.N."/>
            <person name="Stenson P.D."/>
            <person name="Ma B."/>
            <person name="Brent M."/>
            <person name="Arumugam M."/>
            <person name="Shteynberg D."/>
            <person name="Copley R.R."/>
            <person name="Taylor M.S."/>
            <person name="Riethman H."/>
            <person name="Mudunuri U."/>
            <person name="Peterson J."/>
            <person name="Guyer M."/>
            <person name="Felsenfeld A."/>
            <person name="Old S."/>
            <person name="Mockrin S."/>
            <person name="Collins F.S."/>
        </authorList>
    </citation>
    <scope>NUCLEOTIDE SEQUENCE [LARGE SCALE GENOMIC DNA]</scope>
    <source>
        <strain>Brown Norway</strain>
    </source>
</reference>
<reference key="2">
    <citation type="journal article" date="2008" name="J. Biol. Chem.">
        <title>CPT1c is localized in endoplasmic reticulum of neurons and has carnitine palmitoyltransferase activity.</title>
        <authorList>
            <person name="Sierra A.Y."/>
            <person name="Gratacos E."/>
            <person name="Carrasco P."/>
            <person name="Clotet J."/>
            <person name="Urena J."/>
            <person name="Serra D."/>
            <person name="Asins G."/>
            <person name="Hegardt F.G."/>
            <person name="Casals N."/>
        </authorList>
    </citation>
    <scope>FUNCTION</scope>
    <scope>CAUTION</scope>
    <scope>SUBCELLULAR LOCATION</scope>
    <scope>BIOPHYSICOCHEMICAL PROPERTIES</scope>
</reference>
<reference key="3">
    <citation type="journal article" date="2014" name="Appl. Biochem. Biotechnol.">
        <title>Comparison of the catalytic activities of three isozymes of carnitine palmitoyltransferase 1 expressed in COS7 cells.</title>
        <authorList>
            <person name="Hada T."/>
            <person name="Yamamoto T."/>
            <person name="Yamamoto A."/>
            <person name="Ohkura K."/>
            <person name="Yamazaki N."/>
            <person name="Takiguchi Y."/>
            <person name="Shinohara Y."/>
        </authorList>
    </citation>
    <scope>FUNCTION</scope>
    <scope>CAUTION</scope>
</reference>
<dbReference type="EC" id="3.1.2.22" evidence="3"/>
<dbReference type="RefSeq" id="NP_001030097.2">
    <property type="nucleotide sequence ID" value="NM_001034925.2"/>
</dbReference>
<dbReference type="SMR" id="F1LN46"/>
<dbReference type="CORUM" id="F1LN46"/>
<dbReference type="FunCoup" id="F1LN46">
    <property type="interactions" value="1400"/>
</dbReference>
<dbReference type="STRING" id="10116.ENSRNOP00000032802"/>
<dbReference type="GlyGen" id="F1LN46">
    <property type="glycosylation" value="1 site"/>
</dbReference>
<dbReference type="iPTMnet" id="F1LN46"/>
<dbReference type="PhosphoSitePlus" id="F1LN46"/>
<dbReference type="PaxDb" id="10116-ENSRNOP00000032802"/>
<dbReference type="GeneID" id="308579"/>
<dbReference type="KEGG" id="rno:308579"/>
<dbReference type="AGR" id="RGD:1305384"/>
<dbReference type="CTD" id="126129"/>
<dbReference type="RGD" id="1305384">
    <property type="gene designation" value="Cpt1c"/>
</dbReference>
<dbReference type="VEuPathDB" id="HostDB:ENSRNOG00000026163"/>
<dbReference type="eggNOG" id="KOG3716">
    <property type="taxonomic scope" value="Eukaryota"/>
</dbReference>
<dbReference type="HOGENOM" id="CLU_013513_2_1_1"/>
<dbReference type="InParanoid" id="F1LN46"/>
<dbReference type="OrthoDB" id="240216at2759"/>
<dbReference type="TreeFam" id="TF313836"/>
<dbReference type="PRO" id="PR:F1LN46"/>
<dbReference type="Proteomes" id="UP000002494">
    <property type="component" value="Chromosome 1"/>
</dbReference>
<dbReference type="Bgee" id="ENSRNOG00000026163">
    <property type="expression patterns" value="Expressed in frontal cortex and 20 other cell types or tissues"/>
</dbReference>
<dbReference type="GO" id="GO:0032281">
    <property type="term" value="C:AMPA glutamate receptor complex"/>
    <property type="evidence" value="ECO:0000266"/>
    <property type="project" value="RGD"/>
</dbReference>
<dbReference type="GO" id="GO:0030424">
    <property type="term" value="C:axon"/>
    <property type="evidence" value="ECO:0000250"/>
    <property type="project" value="UniProtKB"/>
</dbReference>
<dbReference type="GO" id="GO:0030425">
    <property type="term" value="C:dendrite"/>
    <property type="evidence" value="ECO:0000250"/>
    <property type="project" value="UniProtKB"/>
</dbReference>
<dbReference type="GO" id="GO:0005783">
    <property type="term" value="C:endoplasmic reticulum"/>
    <property type="evidence" value="ECO:0000266"/>
    <property type="project" value="RGD"/>
</dbReference>
<dbReference type="GO" id="GO:0005789">
    <property type="term" value="C:endoplasmic reticulum membrane"/>
    <property type="evidence" value="ECO:0000314"/>
    <property type="project" value="RGD"/>
</dbReference>
<dbReference type="GO" id="GO:0098978">
    <property type="term" value="C:glutamatergic synapse"/>
    <property type="evidence" value="ECO:0000266"/>
    <property type="project" value="RGD"/>
</dbReference>
<dbReference type="GO" id="GO:0098794">
    <property type="term" value="C:postsynapse"/>
    <property type="evidence" value="ECO:0000266"/>
    <property type="project" value="RGD"/>
</dbReference>
<dbReference type="GO" id="GO:0004095">
    <property type="term" value="F:carnitine O-palmitoyltransferase activity"/>
    <property type="evidence" value="ECO:0000314"/>
    <property type="project" value="RGD"/>
</dbReference>
<dbReference type="GO" id="GO:0008474">
    <property type="term" value="F:palmitoyl-(protein) hydrolase activity"/>
    <property type="evidence" value="ECO:0000250"/>
    <property type="project" value="UniProtKB"/>
</dbReference>
<dbReference type="GO" id="GO:0009437">
    <property type="term" value="P:carnitine metabolic process"/>
    <property type="evidence" value="ECO:0000314"/>
    <property type="project" value="RGD"/>
</dbReference>
<dbReference type="GO" id="GO:0006629">
    <property type="term" value="P:lipid metabolic process"/>
    <property type="evidence" value="ECO:0007669"/>
    <property type="project" value="UniProtKB-KW"/>
</dbReference>
<dbReference type="GO" id="GO:0099072">
    <property type="term" value="P:regulation of postsynaptic membrane neurotransmitter receptor levels"/>
    <property type="evidence" value="ECO:0000266"/>
    <property type="project" value="RGD"/>
</dbReference>
<dbReference type="FunFam" id="3.30.559.70:FF:000008">
    <property type="entry name" value="carnitine O-palmitoyltransferase 1, brain isoform"/>
    <property type="match status" value="1"/>
</dbReference>
<dbReference type="FunFam" id="3.30.559.10:FF:000002">
    <property type="entry name" value="carnitine O-palmitoyltransferase 1, liver isoform"/>
    <property type="match status" value="1"/>
</dbReference>
<dbReference type="Gene3D" id="6.10.250.1760">
    <property type="match status" value="1"/>
</dbReference>
<dbReference type="Gene3D" id="3.30.559.10">
    <property type="entry name" value="Chloramphenicol acetyltransferase-like domain"/>
    <property type="match status" value="1"/>
</dbReference>
<dbReference type="Gene3D" id="3.30.559.70">
    <property type="entry name" value="Choline/Carnitine o-acyltransferase, domain 2"/>
    <property type="match status" value="1"/>
</dbReference>
<dbReference type="InterPro" id="IPR000542">
    <property type="entry name" value="Carn_acyl_trans"/>
</dbReference>
<dbReference type="InterPro" id="IPR023213">
    <property type="entry name" value="CAT-like_dom_sf"/>
</dbReference>
<dbReference type="InterPro" id="IPR039551">
    <property type="entry name" value="Cho/carn_acyl_trans"/>
</dbReference>
<dbReference type="InterPro" id="IPR042231">
    <property type="entry name" value="Cho/carn_acyl_trans_2"/>
</dbReference>
<dbReference type="InterPro" id="IPR032476">
    <property type="entry name" value="CPT_N"/>
</dbReference>
<dbReference type="PANTHER" id="PTHR22589">
    <property type="entry name" value="CARNITINE O-ACYLTRANSFERASE"/>
    <property type="match status" value="1"/>
</dbReference>
<dbReference type="PANTHER" id="PTHR22589:SF55">
    <property type="entry name" value="CARNITINE O-PALMITOYLTRANSFERASE 1, BRAIN ISOFORM"/>
    <property type="match status" value="1"/>
</dbReference>
<dbReference type="Pfam" id="PF00755">
    <property type="entry name" value="Carn_acyltransf"/>
    <property type="match status" value="1"/>
</dbReference>
<dbReference type="Pfam" id="PF16484">
    <property type="entry name" value="CPT_N"/>
    <property type="match status" value="1"/>
</dbReference>
<dbReference type="SUPFAM" id="SSF52777">
    <property type="entry name" value="CoA-dependent acyltransferases"/>
    <property type="match status" value="2"/>
</dbReference>
<dbReference type="PROSITE" id="PS00439">
    <property type="entry name" value="ACYLTRANSF_C_1"/>
    <property type="match status" value="1"/>
</dbReference>
<dbReference type="PROSITE" id="PS00440">
    <property type="entry name" value="ACYLTRANSF_C_2"/>
    <property type="match status" value="1"/>
</dbReference>
<comment type="function">
    <text evidence="2 3 5 6">Palmitoyl thioesterase specifically expressed in the endoplasmic reticulum of neurons. Modulates the trafficking of the glutamate receptor, AMPAR, to plasma membrane through depalmitoylation of GRIA1 (By similarity). Also regulates AMPR trafficking through the regulation of SACM1L phosphatidylinositol-3-phosphatase activity by interaction in a malonyl-CoA dependent manner (By similarity). Binds malonyl-CoA and couples malonyl-CoA to ceramide levels, necessary for proper spine maturation and contributing to systemic energy homeostasis and appetite control (By similarity). Binds to palmitoyl-CoA, but does not have carnitine palmitoyltransferase 1 catalytic activity or at very low levels (PubMed:18192268, PubMed:24222496).</text>
</comment>
<comment type="catalytic activity">
    <reaction evidence="3">
        <text>S-hexadecanoyl-L-cysteinyl-[protein] + H2O = L-cysteinyl-[protein] + hexadecanoate + H(+)</text>
        <dbReference type="Rhea" id="RHEA:19233"/>
        <dbReference type="Rhea" id="RHEA-COMP:10131"/>
        <dbReference type="Rhea" id="RHEA-COMP:11032"/>
        <dbReference type="ChEBI" id="CHEBI:7896"/>
        <dbReference type="ChEBI" id="CHEBI:15377"/>
        <dbReference type="ChEBI" id="CHEBI:15378"/>
        <dbReference type="ChEBI" id="CHEBI:29950"/>
        <dbReference type="ChEBI" id="CHEBI:74151"/>
        <dbReference type="EC" id="3.1.2.22"/>
    </reaction>
    <physiologicalReaction direction="left-to-right" evidence="3">
        <dbReference type="Rhea" id="RHEA:19234"/>
    </physiologicalReaction>
</comment>
<comment type="biophysicochemical properties">
    <kinetics>
        <KM evidence="5">25.35 mM for palmitoyl-CoA</KM>
        <KM evidence="5">58.53 mM for carnitine</KM>
        <Vmax evidence="5">0.09 nmol/min/mg enzyme (towards carnitine)</Vmax>
        <Vmax evidence="5">0.095 nmol/min/mg enzyme (towards palmitoyl-CoA)</Vmax>
    </kinetics>
</comment>
<comment type="subunit">
    <text evidence="2 3">Peripherally associated with AMPAR complex. AMPAR complex consists of an inner core made of 4 pore-forming GluA/GRIA proteins (GRIA1, GRIA2, GRIA3 and GRIA4) and 4 major auxiliary subunits arranged in a twofold symmetry. One of the two pairs of distinct binding sites is occupied either by CNIH2, CNIH3 or CACNG2, CACNG3. The other harbors CACNG2, CACNG3, CACNG4, CACNG8 or GSG1L. This inner core of AMPAR complex is complemented by outer core constituents binding directly to the GluA/GRIA proteins at sites distinct from the interaction sites of the inner core constituents. Outer core constituents include at least PRRT1, PRRT2, CKAMP44/SHISA9, FRRS1L and NRN1. The proteins of the inner and outer core serve as a platform for other, more peripherally associated AMPAR constituents, including CPT1C. Alone or in combination, these auxiliary subunits control the gating and pharmacology of the AMPAR complex and profoundly impact their biogenesis and protein processing (By similarity). Interacts with SACM1L; the interaction regulates SACM1L phosphatidylinositol-3-phosphatase activity and translocation to endoplasmic reticulum/trans Golgi network in a malonyl-CoA dependent manner (By similarity). Interacts with ATL1 (By similarity).</text>
</comment>
<comment type="subcellular location">
    <subcellularLocation>
        <location evidence="2">Synapse</location>
    </subcellularLocation>
    <subcellularLocation>
        <location evidence="2">Cell projection</location>
        <location evidence="2">Dendrite</location>
    </subcellularLocation>
    <subcellularLocation>
        <location evidence="2">Cell projection</location>
        <location evidence="2">Axon</location>
    </subcellularLocation>
    <subcellularLocation>
        <location evidence="5">Endoplasmic reticulum membrane</location>
        <topology evidence="4">Multi-pass membrane protein</topology>
    </subcellularLocation>
    <text evidence="2">Localized in the soma and dendritic and axonal projections.</text>
</comment>
<comment type="tissue specificity">
    <text>Expressed in brain (at protein level).</text>
</comment>
<comment type="domain">
    <text evidence="3">CPT1 enzymes are comprised of an N-terminal regulatory domain and a C-terminal catalytic domain that are separated by two transmembrane helices. In CPT1A, the regulatory domain, termed N, adopts a malonyl-CoA inhibitory and non-inhibitory state, Nalpha and Nbeta, respectively, which differ in their association with the catalytic domain. In CPT1C, the inhibitory Nalpha state is structurally homolog whereas the non-inhibitory Nbeta state is severely destabilized which probably contributes to the low catalytic activity of CPT1C relative to CPT1A and makes its association with the catalytic domain unlikely.</text>
</comment>
<comment type="similarity">
    <text evidence="7">Belongs to the carnitine/choline acetyltransferase family.</text>
</comment>
<comment type="caution">
    <text evidence="5 6">In contrast to its paralogs, CPT1A and CPT1B, does not have, or at very low levels, carnitine O-palmitoyltransferase activity (EC:2.3.1.21) in vivo, being unable to catalyze the transfer of the acyl group of long-chain fatty acid-CoA conjugates onto carnitine. This is in agreement with its expression specific to neurons which is a cell-type that does not use fatty acids as fuel to any major extent and the fact that it locates to endoplasmic reticulum instead of mitochondria.</text>
</comment>
<proteinExistence type="evidence at protein level"/>
<protein>
    <recommendedName>
        <fullName>Palmitoyl thioesterase CPT1C</fullName>
        <ecNumber evidence="3">3.1.2.22</ecNumber>
    </recommendedName>
    <alternativeName>
        <fullName>Carnitine O-palmitoyltransferase 1, brain isoform</fullName>
        <shortName>CPT1-B</shortName>
    </alternativeName>
    <alternativeName>
        <fullName>Carnitine O-palmitoyltransferase I, brain isoform</fullName>
        <shortName>CPTI-B</shortName>
    </alternativeName>
    <alternativeName>
        <fullName>Carnitine palmitoyltransferase 1C</fullName>
    </alternativeName>
    <alternativeName>
        <fullName>Carnitine palmitoyltransferase I</fullName>
        <shortName>CPT I-C</shortName>
    </alternativeName>
</protein>
<keyword id="KW-0012">Acyltransferase</keyword>
<keyword id="KW-0966">Cell projection</keyword>
<keyword id="KW-0256">Endoplasmic reticulum</keyword>
<keyword id="KW-0276">Fatty acid metabolism</keyword>
<keyword id="KW-0378">Hydrolase</keyword>
<keyword id="KW-0443">Lipid metabolism</keyword>
<keyword id="KW-0472">Membrane</keyword>
<keyword id="KW-1185">Reference proteome</keyword>
<keyword id="KW-0770">Synapse</keyword>
<keyword id="KW-0808">Transferase</keyword>
<keyword id="KW-0812">Transmembrane</keyword>
<keyword id="KW-1133">Transmembrane helix</keyword>
<feature type="chain" id="PRO_0000420690" description="Palmitoyl thioesterase CPT1C">
    <location>
        <begin position="1"/>
        <end position="801"/>
    </location>
</feature>
<feature type="topological domain" description="Cytoplasmic" evidence="4">
    <location>
        <begin position="1"/>
        <end position="49"/>
    </location>
</feature>
<feature type="transmembrane region" description="Helical" evidence="4">
    <location>
        <begin position="50"/>
        <end position="70"/>
    </location>
</feature>
<feature type="topological domain" description="Mitochondrial intermembrane" evidence="4">
    <location>
        <begin position="71"/>
        <end position="103"/>
    </location>
</feature>
<feature type="transmembrane region" description="Helical" evidence="4">
    <location>
        <begin position="104"/>
        <end position="124"/>
    </location>
</feature>
<feature type="topological domain" description="Cytoplasmic" evidence="4">
    <location>
        <begin position="125"/>
        <end position="801"/>
    </location>
</feature>
<feature type="region of interest" description="Required for interaction with GRIA1" evidence="2">
    <location>
        <begin position="760"/>
        <end position="801"/>
    </location>
</feature>
<feature type="active site" description="Proton acceptor" evidence="3">
    <location>
        <position position="469"/>
    </location>
</feature>
<feature type="binding site" evidence="1">
    <location>
        <begin position="551"/>
        <end position="563"/>
    </location>
    <ligand>
        <name>CoA</name>
        <dbReference type="ChEBI" id="CHEBI:57287"/>
    </ligand>
</feature>
<feature type="binding site" evidence="1">
    <location>
        <position position="585"/>
    </location>
    <ligand>
        <name>(R)-carnitine</name>
        <dbReference type="ChEBI" id="CHEBI:16347"/>
    </ligand>
</feature>
<feature type="binding site" evidence="1">
    <location>
        <position position="587"/>
    </location>
    <ligand>
        <name>(R)-carnitine</name>
        <dbReference type="ChEBI" id="CHEBI:16347"/>
    </ligand>
</feature>
<feature type="binding site" evidence="1">
    <location>
        <position position="598"/>
    </location>
    <ligand>
        <name>(R)-carnitine</name>
        <dbReference type="ChEBI" id="CHEBI:16347"/>
    </ligand>
</feature>
<name>CPT1C_RAT</name>
<accession>F1LN46</accession>